<evidence type="ECO:0000250" key="1">
    <source>
        <dbReference type="UniProtKB" id="Q8MPX3"/>
    </source>
</evidence>
<evidence type="ECO:0000255" key="2"/>
<evidence type="ECO:0000255" key="3">
    <source>
        <dbReference type="PROSITE-ProRule" id="PRU00286"/>
    </source>
</evidence>
<feature type="signal peptide" evidence="2">
    <location>
        <begin position="1"/>
        <end position="21"/>
    </location>
</feature>
<feature type="chain" id="PRO_0000270980" description="DnaJ homolog dnj-20" evidence="2">
    <location>
        <begin position="22"/>
        <end position="382"/>
    </location>
</feature>
<feature type="domain" description="J" evidence="3">
    <location>
        <begin position="24"/>
        <end position="89"/>
    </location>
</feature>
<proteinExistence type="inferred from homology"/>
<dbReference type="EMBL" id="HE600951">
    <property type="protein sequence ID" value="CAP22286.1"/>
    <property type="molecule type" value="Genomic_DNA"/>
</dbReference>
<dbReference type="SMR" id="Q626I7"/>
<dbReference type="FunCoup" id="Q626I7">
    <property type="interactions" value="2790"/>
</dbReference>
<dbReference type="STRING" id="6238.Q626I7"/>
<dbReference type="KEGG" id="cbr:CBG_00965"/>
<dbReference type="CTD" id="8573301"/>
<dbReference type="WormBase" id="CBG00965">
    <property type="protein sequence ID" value="CBP42204"/>
    <property type="gene ID" value="WBGene00024268"/>
    <property type="gene designation" value="Cbr-dnj-20"/>
</dbReference>
<dbReference type="eggNOG" id="KOG0713">
    <property type="taxonomic scope" value="Eukaryota"/>
</dbReference>
<dbReference type="HOGENOM" id="CLU_017633_0_0_1"/>
<dbReference type="InParanoid" id="Q626I7"/>
<dbReference type="OMA" id="FAGRDFY"/>
<dbReference type="Proteomes" id="UP000008549">
    <property type="component" value="Unassembled WGS sequence"/>
</dbReference>
<dbReference type="GO" id="GO:0005783">
    <property type="term" value="C:endoplasmic reticulum"/>
    <property type="evidence" value="ECO:0000318"/>
    <property type="project" value="GO_Central"/>
</dbReference>
<dbReference type="GO" id="GO:0051787">
    <property type="term" value="F:misfolded protein binding"/>
    <property type="evidence" value="ECO:0000318"/>
    <property type="project" value="GO_Central"/>
</dbReference>
<dbReference type="GO" id="GO:0051082">
    <property type="term" value="F:unfolded protein binding"/>
    <property type="evidence" value="ECO:0000318"/>
    <property type="project" value="GO_Central"/>
</dbReference>
<dbReference type="GO" id="GO:0006457">
    <property type="term" value="P:protein folding"/>
    <property type="evidence" value="ECO:0007669"/>
    <property type="project" value="InterPro"/>
</dbReference>
<dbReference type="GO" id="GO:0051604">
    <property type="term" value="P:protein maturation"/>
    <property type="evidence" value="ECO:0000318"/>
    <property type="project" value="GO_Central"/>
</dbReference>
<dbReference type="CDD" id="cd06257">
    <property type="entry name" value="DnaJ"/>
    <property type="match status" value="1"/>
</dbReference>
<dbReference type="CDD" id="cd10747">
    <property type="entry name" value="DnaJ_C"/>
    <property type="match status" value="1"/>
</dbReference>
<dbReference type="FunFam" id="2.60.260.20:FF:000013">
    <property type="entry name" value="DnaJ subfamily B member 11"/>
    <property type="match status" value="1"/>
</dbReference>
<dbReference type="Gene3D" id="1.10.287.110">
    <property type="entry name" value="DnaJ domain"/>
    <property type="match status" value="1"/>
</dbReference>
<dbReference type="Gene3D" id="2.60.260.20">
    <property type="entry name" value="Urease metallochaperone UreE, N-terminal domain"/>
    <property type="match status" value="2"/>
</dbReference>
<dbReference type="InterPro" id="IPR051736">
    <property type="entry name" value="DnaJ-B11-like"/>
</dbReference>
<dbReference type="InterPro" id="IPR002939">
    <property type="entry name" value="DnaJ_C"/>
</dbReference>
<dbReference type="InterPro" id="IPR001623">
    <property type="entry name" value="DnaJ_domain"/>
</dbReference>
<dbReference type="InterPro" id="IPR018253">
    <property type="entry name" value="DnaJ_domain_CS"/>
</dbReference>
<dbReference type="InterPro" id="IPR008971">
    <property type="entry name" value="HSP40/DnaJ_pept-bd"/>
</dbReference>
<dbReference type="InterPro" id="IPR036869">
    <property type="entry name" value="J_dom_sf"/>
</dbReference>
<dbReference type="PANTHER" id="PTHR44298">
    <property type="entry name" value="DNAJ HOMOLOG SUBFAMILY B MEMBER 11"/>
    <property type="match status" value="1"/>
</dbReference>
<dbReference type="PANTHER" id="PTHR44298:SF1">
    <property type="entry name" value="DNAJ HOMOLOG SUBFAMILY B MEMBER 11"/>
    <property type="match status" value="1"/>
</dbReference>
<dbReference type="Pfam" id="PF00226">
    <property type="entry name" value="DnaJ"/>
    <property type="match status" value="1"/>
</dbReference>
<dbReference type="Pfam" id="PF01556">
    <property type="entry name" value="DnaJ_C"/>
    <property type="match status" value="2"/>
</dbReference>
<dbReference type="PRINTS" id="PR00625">
    <property type="entry name" value="JDOMAIN"/>
</dbReference>
<dbReference type="SMART" id="SM00271">
    <property type="entry name" value="DnaJ"/>
    <property type="match status" value="1"/>
</dbReference>
<dbReference type="SUPFAM" id="SSF46565">
    <property type="entry name" value="Chaperone J-domain"/>
    <property type="match status" value="1"/>
</dbReference>
<dbReference type="SUPFAM" id="SSF49493">
    <property type="entry name" value="HSP40/DnaJ peptide-binding domain"/>
    <property type="match status" value="2"/>
</dbReference>
<dbReference type="PROSITE" id="PS00636">
    <property type="entry name" value="DNAJ_1"/>
    <property type="match status" value="1"/>
</dbReference>
<dbReference type="PROSITE" id="PS50076">
    <property type="entry name" value="DNAJ_2"/>
    <property type="match status" value="1"/>
</dbReference>
<sequence length="382" mass="42983">MRILNVSLLVLTAFLVDFVECGRDFYKILGVSKNANANQIKKAYRKQAKELHPDRNPDDEMANEKFQDLSAAYEVLSDKEKRAMYDRHGEEGVAKMGGGGGGGHDPFSSFFGDFFGGGGGNGGDEGTPKGADVTIDLFVTLEEAYNGHFVEIKRKKAVYKQTSGTRQCNCRHEMRTEQMGQGRFQMFQVKVCDECPNVKLVQENKVLEVEVEVGADEGHTQIFHGEGEPHIEGDPGDLKFKIRIQKHPRFLISVTGIEIIELKVDELVELLLEGIRFERKGDDLYTNVTISLQDALNGFEMEILHLDGHMVKVQRDKVTWPGARLRKKDEGMPSMENNNKKGMLIVTFDVEFPKTELTDEQKAQIIEILQQQGIKPRAYNGL</sequence>
<gene>
    <name evidence="1" type="primary">dnj-20</name>
    <name type="ORF">CBG00965</name>
</gene>
<reference key="1">
    <citation type="journal article" date="2003" name="PLoS Biol.">
        <title>The genome sequence of Caenorhabditis briggsae: a platform for comparative genomics.</title>
        <authorList>
            <person name="Stein L.D."/>
            <person name="Bao Z."/>
            <person name="Blasiar D."/>
            <person name="Blumenthal T."/>
            <person name="Brent M.R."/>
            <person name="Chen N."/>
            <person name="Chinwalla A."/>
            <person name="Clarke L."/>
            <person name="Clee C."/>
            <person name="Coghlan A."/>
            <person name="Coulson A."/>
            <person name="D'Eustachio P."/>
            <person name="Fitch D.H.A."/>
            <person name="Fulton L.A."/>
            <person name="Fulton R.E."/>
            <person name="Griffiths-Jones S."/>
            <person name="Harris T.W."/>
            <person name="Hillier L.W."/>
            <person name="Kamath R."/>
            <person name="Kuwabara P.E."/>
            <person name="Mardis E.R."/>
            <person name="Marra M.A."/>
            <person name="Miner T.L."/>
            <person name="Minx P."/>
            <person name="Mullikin J.C."/>
            <person name="Plumb R.W."/>
            <person name="Rogers J."/>
            <person name="Schein J.E."/>
            <person name="Sohrmann M."/>
            <person name="Spieth J."/>
            <person name="Stajich J.E."/>
            <person name="Wei C."/>
            <person name="Willey D."/>
            <person name="Wilson R.K."/>
            <person name="Durbin R.M."/>
            <person name="Waterston R.H."/>
        </authorList>
    </citation>
    <scope>NUCLEOTIDE SEQUENCE [LARGE SCALE GENOMIC DNA]</scope>
    <source>
        <strain>AF16</strain>
    </source>
</reference>
<accession>Q626I7</accession>
<accession>A8WP80</accession>
<protein>
    <recommendedName>
        <fullName>DnaJ homolog dnj-20</fullName>
    </recommendedName>
    <alternativeName>
        <fullName>DnaJ domain protein 20</fullName>
    </alternativeName>
</protein>
<name>DNJ20_CAEBR</name>
<organism>
    <name type="scientific">Caenorhabditis briggsae</name>
    <dbReference type="NCBI Taxonomy" id="6238"/>
    <lineage>
        <taxon>Eukaryota</taxon>
        <taxon>Metazoa</taxon>
        <taxon>Ecdysozoa</taxon>
        <taxon>Nematoda</taxon>
        <taxon>Chromadorea</taxon>
        <taxon>Rhabditida</taxon>
        <taxon>Rhabditina</taxon>
        <taxon>Rhabditomorpha</taxon>
        <taxon>Rhabditoidea</taxon>
        <taxon>Rhabditidae</taxon>
        <taxon>Peloderinae</taxon>
        <taxon>Caenorhabditis</taxon>
    </lineage>
</organism>
<keyword id="KW-0143">Chaperone</keyword>
<keyword id="KW-1185">Reference proteome</keyword>
<keyword id="KW-0732">Signal</keyword>